<accession>Q9FV50</accession>
<accession>Q9SW64</accession>
<dbReference type="EC" id="3.4.11.18" evidence="1"/>
<dbReference type="EMBL" id="AF250963">
    <property type="protein sequence ID" value="AAG33977.1"/>
    <property type="molecule type" value="mRNA"/>
</dbReference>
<dbReference type="EMBL" id="Z99707">
    <property type="protein sequence ID" value="CAB16790.1"/>
    <property type="status" value="ALT_SEQ"/>
    <property type="molecule type" value="Genomic_DNA"/>
</dbReference>
<dbReference type="EMBL" id="AL161590">
    <property type="protein sequence ID" value="CAB80370.1"/>
    <property type="status" value="ALT_SEQ"/>
    <property type="molecule type" value="Genomic_DNA"/>
</dbReference>
<dbReference type="EMBL" id="CP002687">
    <property type="protein sequence ID" value="AEE86740.1"/>
    <property type="molecule type" value="Genomic_DNA"/>
</dbReference>
<dbReference type="EMBL" id="AK118314">
    <property type="protein sequence ID" value="BAC42930.1"/>
    <property type="molecule type" value="mRNA"/>
</dbReference>
<dbReference type="EMBL" id="BT005680">
    <property type="protein sequence ID" value="AAO64100.1"/>
    <property type="molecule type" value="mRNA"/>
</dbReference>
<dbReference type="EMBL" id="AY085839">
    <property type="protein sequence ID" value="AAM63054.1"/>
    <property type="molecule type" value="mRNA"/>
</dbReference>
<dbReference type="PIR" id="E85437">
    <property type="entry name" value="E85437"/>
</dbReference>
<dbReference type="RefSeq" id="NP_568014.1">
    <property type="nucleotide sequence ID" value="NM_119867.3"/>
</dbReference>
<dbReference type="SMR" id="Q9FV50"/>
<dbReference type="FunCoup" id="Q9FV50">
    <property type="interactions" value="1675"/>
</dbReference>
<dbReference type="STRING" id="3702.Q9FV50"/>
<dbReference type="MEROPS" id="M24.A06"/>
<dbReference type="iPTMnet" id="Q9FV50"/>
<dbReference type="PaxDb" id="3702-AT4G37040.1"/>
<dbReference type="ProteomicsDB" id="238845"/>
<dbReference type="EnsemblPlants" id="AT4G37040.1">
    <property type="protein sequence ID" value="AT4G37040.1"/>
    <property type="gene ID" value="AT4G37040"/>
</dbReference>
<dbReference type="GeneID" id="829858"/>
<dbReference type="Gramene" id="AT4G37040.1">
    <property type="protein sequence ID" value="AT4G37040.1"/>
    <property type="gene ID" value="AT4G37040"/>
</dbReference>
<dbReference type="KEGG" id="ath:AT4G37040"/>
<dbReference type="Araport" id="AT4G37040"/>
<dbReference type="TAIR" id="AT4G37040">
    <property type="gene designation" value="MAP1D"/>
</dbReference>
<dbReference type="eggNOG" id="KOG2738">
    <property type="taxonomic scope" value="Eukaryota"/>
</dbReference>
<dbReference type="HOGENOM" id="CLU_015857_1_2_1"/>
<dbReference type="InParanoid" id="Q9FV50"/>
<dbReference type="OMA" id="RGAESCY"/>
<dbReference type="PhylomeDB" id="Q9FV50"/>
<dbReference type="PRO" id="PR:Q9FV50"/>
<dbReference type="Proteomes" id="UP000006548">
    <property type="component" value="Chromosome 4"/>
</dbReference>
<dbReference type="ExpressionAtlas" id="Q9FV50">
    <property type="expression patterns" value="baseline and differential"/>
</dbReference>
<dbReference type="GO" id="GO:0009507">
    <property type="term" value="C:chloroplast"/>
    <property type="evidence" value="ECO:0007005"/>
    <property type="project" value="TAIR"/>
</dbReference>
<dbReference type="GO" id="GO:0005739">
    <property type="term" value="C:mitochondrion"/>
    <property type="evidence" value="ECO:0007669"/>
    <property type="project" value="UniProtKB-SubCell"/>
</dbReference>
<dbReference type="GO" id="GO:0004239">
    <property type="term" value="F:initiator methionyl aminopeptidase activity"/>
    <property type="evidence" value="ECO:0007669"/>
    <property type="project" value="UniProtKB-UniRule"/>
</dbReference>
<dbReference type="GO" id="GO:0046872">
    <property type="term" value="F:metal ion binding"/>
    <property type="evidence" value="ECO:0007669"/>
    <property type="project" value="UniProtKB-UniRule"/>
</dbReference>
<dbReference type="GO" id="GO:0070006">
    <property type="term" value="F:metalloaminopeptidase activity"/>
    <property type="evidence" value="ECO:0007669"/>
    <property type="project" value="UniProtKB-UniRule"/>
</dbReference>
<dbReference type="GO" id="GO:0031365">
    <property type="term" value="P:N-terminal protein amino acid modification"/>
    <property type="evidence" value="ECO:0000304"/>
    <property type="project" value="TAIR"/>
</dbReference>
<dbReference type="GO" id="GO:0006508">
    <property type="term" value="P:proteolysis"/>
    <property type="evidence" value="ECO:0007669"/>
    <property type="project" value="UniProtKB-KW"/>
</dbReference>
<dbReference type="CDD" id="cd01086">
    <property type="entry name" value="MetAP1"/>
    <property type="match status" value="1"/>
</dbReference>
<dbReference type="FunFam" id="3.90.230.10:FF:000011">
    <property type="entry name" value="Methionine aminopeptidase"/>
    <property type="match status" value="1"/>
</dbReference>
<dbReference type="Gene3D" id="3.90.230.10">
    <property type="entry name" value="Creatinase/methionine aminopeptidase superfamily"/>
    <property type="match status" value="1"/>
</dbReference>
<dbReference type="HAMAP" id="MF_01974">
    <property type="entry name" value="MetAP_1"/>
    <property type="match status" value="1"/>
</dbReference>
<dbReference type="InterPro" id="IPR036005">
    <property type="entry name" value="Creatinase/aminopeptidase-like"/>
</dbReference>
<dbReference type="InterPro" id="IPR000994">
    <property type="entry name" value="Pept_M24"/>
</dbReference>
<dbReference type="InterPro" id="IPR001714">
    <property type="entry name" value="Pept_M24_MAP"/>
</dbReference>
<dbReference type="InterPro" id="IPR002467">
    <property type="entry name" value="Pept_M24A_MAP1"/>
</dbReference>
<dbReference type="NCBIfam" id="TIGR00500">
    <property type="entry name" value="met_pdase_I"/>
    <property type="match status" value="1"/>
</dbReference>
<dbReference type="PANTHER" id="PTHR43330">
    <property type="entry name" value="METHIONINE AMINOPEPTIDASE"/>
    <property type="match status" value="1"/>
</dbReference>
<dbReference type="PANTHER" id="PTHR43330:SF8">
    <property type="entry name" value="METHIONINE AMINOPEPTIDASE 1D, MITOCHONDRIAL"/>
    <property type="match status" value="1"/>
</dbReference>
<dbReference type="Pfam" id="PF00557">
    <property type="entry name" value="Peptidase_M24"/>
    <property type="match status" value="1"/>
</dbReference>
<dbReference type="PRINTS" id="PR00599">
    <property type="entry name" value="MAPEPTIDASE"/>
</dbReference>
<dbReference type="SUPFAM" id="SSF55920">
    <property type="entry name" value="Creatinase/aminopeptidase"/>
    <property type="match status" value="1"/>
</dbReference>
<dbReference type="PROSITE" id="PS00680">
    <property type="entry name" value="MAP_1"/>
    <property type="match status" value="1"/>
</dbReference>
<sequence>MAGVKSLQPRLISSFLGNNSIRSTQPLIHLFRFDLGRRHVSMQLSRTFSGLTDLLFNRRNEDEVIDGKRKRLRPGNVSPRRPVPGHITKPPYVDSLQAPGISSGLEVHDKKGIECMRASGILAARVRDYAGTLVKPGVTTDEIDEAVHNMIIENGAYPSPLGYGGFPKSVCTSVNECICHGIPDSRPLEDGDIINIDVTVYLNGYHGDTSATFFCGNVDEKAKKLVEVTKESLDKAISICGPGVEYKKIGKVIHDLADKHKYGVVRQFVGHGVGSVFHADPVVLHFRNNEAGRMVLNQTFTIEPMLTIGSRNPIMWDDNWTVVTEDASLSAQFEHTILITKDGAEILTKC</sequence>
<feature type="transit peptide" description="Chloroplast and mitochondrion" evidence="1 5">
    <location>
        <begin position="1"/>
        <end position="49"/>
    </location>
</feature>
<feature type="chain" id="PRO_0000045807" description="Methionine aminopeptidase 1D, chloroplastic/mitochondrial">
    <location>
        <begin position="50"/>
        <end position="350"/>
    </location>
</feature>
<feature type="region of interest" description="Disordered" evidence="2">
    <location>
        <begin position="71"/>
        <end position="90"/>
    </location>
</feature>
<feature type="binding site" evidence="1">
    <location>
        <position position="180"/>
    </location>
    <ligand>
        <name>substrate</name>
    </ligand>
</feature>
<feature type="binding site" evidence="1">
    <location>
        <position position="197"/>
    </location>
    <ligand>
        <name>a divalent metal cation</name>
        <dbReference type="ChEBI" id="CHEBI:60240"/>
        <label>1</label>
    </ligand>
</feature>
<feature type="binding site" evidence="1">
    <location>
        <position position="208"/>
    </location>
    <ligand>
        <name>a divalent metal cation</name>
        <dbReference type="ChEBI" id="CHEBI:60240"/>
        <label>1</label>
    </ligand>
</feature>
<feature type="binding site" evidence="1">
    <location>
        <position position="208"/>
    </location>
    <ligand>
        <name>a divalent metal cation</name>
        <dbReference type="ChEBI" id="CHEBI:60240"/>
        <label>2</label>
        <note>catalytic</note>
    </ligand>
</feature>
<feature type="binding site" evidence="1">
    <location>
        <position position="271"/>
    </location>
    <ligand>
        <name>a divalent metal cation</name>
        <dbReference type="ChEBI" id="CHEBI:60240"/>
        <label>2</label>
        <note>catalytic</note>
    </ligand>
</feature>
<feature type="binding site" evidence="1">
    <location>
        <position position="278"/>
    </location>
    <ligand>
        <name>substrate</name>
    </ligand>
</feature>
<feature type="binding site" evidence="1">
    <location>
        <position position="303"/>
    </location>
    <ligand>
        <name>a divalent metal cation</name>
        <dbReference type="ChEBI" id="CHEBI:60240"/>
        <label>2</label>
        <note>catalytic</note>
    </ligand>
</feature>
<feature type="binding site" evidence="1">
    <location>
        <position position="334"/>
    </location>
    <ligand>
        <name>a divalent metal cation</name>
        <dbReference type="ChEBI" id="CHEBI:60240"/>
        <label>1</label>
    </ligand>
</feature>
<feature type="binding site" evidence="1">
    <location>
        <position position="334"/>
    </location>
    <ligand>
        <name>a divalent metal cation</name>
        <dbReference type="ChEBI" id="CHEBI:60240"/>
        <label>2</label>
        <note>catalytic</note>
    </ligand>
</feature>
<feature type="modified residue" description="N-acetylglycine" evidence="5">
    <location>
        <position position="50"/>
    </location>
</feature>
<gene>
    <name type="primary">MAP1D</name>
    <name type="ordered locus">At4g37040</name>
    <name type="ORF">C7A10.320</name>
</gene>
<name>MAP1D_ARATH</name>
<comment type="function">
    <text evidence="1">Removes the N-terminal methionine from nascent proteins. The N-terminal methionine is often cleaved when the second residue in the primary sequence is small and uncharged (Met-Ala-, Cys, Gly, Pro, Ser, Thr, or Val).</text>
</comment>
<comment type="catalytic activity">
    <reaction evidence="1">
        <text>Release of N-terminal amino acids, preferentially methionine, from peptides and arylamides.</text>
        <dbReference type="EC" id="3.4.11.18"/>
    </reaction>
</comment>
<comment type="cofactor">
    <cofactor evidence="1">
        <name>Co(2+)</name>
        <dbReference type="ChEBI" id="CHEBI:48828"/>
    </cofactor>
    <cofactor evidence="1">
        <name>Zn(2+)</name>
        <dbReference type="ChEBI" id="CHEBI:29105"/>
    </cofactor>
    <cofactor evidence="1">
        <name>Mn(2+)</name>
        <dbReference type="ChEBI" id="CHEBI:29035"/>
    </cofactor>
    <cofactor evidence="1">
        <name>Fe(2+)</name>
        <dbReference type="ChEBI" id="CHEBI:29033"/>
    </cofactor>
    <text evidence="1">Binds 2 divalent metal cations per subunit. Has a high-affinity and a low affinity metal-binding site. The true nature of the physiological cofactor is under debate. The enzyme is active with cobalt, zinc, manganese or divalent iron ions. Most likely, methionine aminopeptidases function as mononuclear Fe(2+)-metalloproteases under physiological conditions, and the catalytically relevant metal-binding site has been assigned to the histidine-containing high-affinity site.</text>
</comment>
<comment type="subcellular location">
    <subcellularLocation>
        <location evidence="1 3">Plastid</location>
        <location evidence="1 3">Chloroplast</location>
    </subcellularLocation>
    <subcellularLocation>
        <location evidence="1 3">Mitochondrion</location>
    </subcellularLocation>
</comment>
<comment type="tissue specificity">
    <text evidence="3">Ubiquitous. Preferentially expressed in green tissues.</text>
</comment>
<comment type="similarity">
    <text evidence="1">Belongs to the peptidase M24A family. Methionine aminopeptidase type 1 subfamily.</text>
</comment>
<comment type="sequence caution" evidence="4">
    <conflict type="erroneous gene model prediction">
        <sequence resource="EMBL-CDS" id="CAB16790"/>
    </conflict>
</comment>
<comment type="sequence caution" evidence="4">
    <conflict type="erroneous gene model prediction">
        <sequence resource="EMBL-CDS" id="CAB80370"/>
    </conflict>
</comment>
<reference key="1">
    <citation type="journal article" date="2000" name="EMBO J.">
        <title>Identification of eukaryotic peptide deformylases reveals universality of N-terminal protein processing mechanisms.</title>
        <authorList>
            <person name="Giglione C."/>
            <person name="Serero A."/>
            <person name="Pierre M."/>
            <person name="Boisson B."/>
            <person name="Meinnel T."/>
        </authorList>
    </citation>
    <scope>NUCLEOTIDE SEQUENCE [MRNA]</scope>
    <scope>TISSUE SPECIFICITY</scope>
    <scope>SUBCELLULAR LOCATION</scope>
</reference>
<reference key="2">
    <citation type="journal article" date="1998" name="Nature">
        <title>Analysis of 1.9 Mb of contiguous sequence from chromosome 4 of Arabidopsis thaliana.</title>
        <authorList>
            <person name="Bevan M."/>
            <person name="Bancroft I."/>
            <person name="Bent E."/>
            <person name="Love K."/>
            <person name="Goodman H.M."/>
            <person name="Dean C."/>
            <person name="Bergkamp R."/>
            <person name="Dirkse W."/>
            <person name="van Staveren M."/>
            <person name="Stiekema W."/>
            <person name="Drost L."/>
            <person name="Ridley P."/>
            <person name="Hudson S.-A."/>
            <person name="Patel K."/>
            <person name="Murphy G."/>
            <person name="Piffanelli P."/>
            <person name="Wedler H."/>
            <person name="Wedler E."/>
            <person name="Wambutt R."/>
            <person name="Weitzenegger T."/>
            <person name="Pohl T."/>
            <person name="Terryn N."/>
            <person name="Gielen J."/>
            <person name="Villarroel R."/>
            <person name="De Clercq R."/>
            <person name="van Montagu M."/>
            <person name="Lecharny A."/>
            <person name="Aubourg S."/>
            <person name="Gy I."/>
            <person name="Kreis M."/>
            <person name="Lao N."/>
            <person name="Kavanagh T."/>
            <person name="Hempel S."/>
            <person name="Kotter P."/>
            <person name="Entian K.-D."/>
            <person name="Rieger M."/>
            <person name="Schaefer M."/>
            <person name="Funk B."/>
            <person name="Mueller-Auer S."/>
            <person name="Silvey M."/>
            <person name="James R."/>
            <person name="Monfort A."/>
            <person name="Pons A."/>
            <person name="Puigdomenech P."/>
            <person name="Douka A."/>
            <person name="Voukelatou E."/>
            <person name="Milioni D."/>
            <person name="Hatzopoulos P."/>
            <person name="Piravandi E."/>
            <person name="Obermaier B."/>
            <person name="Hilbert H."/>
            <person name="Duesterhoeft A."/>
            <person name="Moores T."/>
            <person name="Jones J.D.G."/>
            <person name="Eneva T."/>
            <person name="Palme K."/>
            <person name="Benes V."/>
            <person name="Rechmann S."/>
            <person name="Ansorge W."/>
            <person name="Cooke R."/>
            <person name="Berger C."/>
            <person name="Delseny M."/>
            <person name="Voet M."/>
            <person name="Volckaert G."/>
            <person name="Mewes H.-W."/>
            <person name="Klosterman S."/>
            <person name="Schueller C."/>
            <person name="Chalwatzis N."/>
        </authorList>
    </citation>
    <scope>NUCLEOTIDE SEQUENCE [LARGE SCALE GENOMIC DNA]</scope>
    <source>
        <strain>cv. Columbia</strain>
    </source>
</reference>
<reference key="3">
    <citation type="journal article" date="1999" name="Nature">
        <title>Sequence and analysis of chromosome 4 of the plant Arabidopsis thaliana.</title>
        <authorList>
            <person name="Mayer K.F.X."/>
            <person name="Schueller C."/>
            <person name="Wambutt R."/>
            <person name="Murphy G."/>
            <person name="Volckaert G."/>
            <person name="Pohl T."/>
            <person name="Duesterhoeft A."/>
            <person name="Stiekema W."/>
            <person name="Entian K.-D."/>
            <person name="Terryn N."/>
            <person name="Harris B."/>
            <person name="Ansorge W."/>
            <person name="Brandt P."/>
            <person name="Grivell L.A."/>
            <person name="Rieger M."/>
            <person name="Weichselgartner M."/>
            <person name="de Simone V."/>
            <person name="Obermaier B."/>
            <person name="Mache R."/>
            <person name="Mueller M."/>
            <person name="Kreis M."/>
            <person name="Delseny M."/>
            <person name="Puigdomenech P."/>
            <person name="Watson M."/>
            <person name="Schmidtheini T."/>
            <person name="Reichert B."/>
            <person name="Portetelle D."/>
            <person name="Perez-Alonso M."/>
            <person name="Boutry M."/>
            <person name="Bancroft I."/>
            <person name="Vos P."/>
            <person name="Hoheisel J."/>
            <person name="Zimmermann W."/>
            <person name="Wedler H."/>
            <person name="Ridley P."/>
            <person name="Langham S.-A."/>
            <person name="McCullagh B."/>
            <person name="Bilham L."/>
            <person name="Robben J."/>
            <person name="van der Schueren J."/>
            <person name="Grymonprez B."/>
            <person name="Chuang Y.-J."/>
            <person name="Vandenbussche F."/>
            <person name="Braeken M."/>
            <person name="Weltjens I."/>
            <person name="Voet M."/>
            <person name="Bastiaens I."/>
            <person name="Aert R."/>
            <person name="Defoor E."/>
            <person name="Weitzenegger T."/>
            <person name="Bothe G."/>
            <person name="Ramsperger U."/>
            <person name="Hilbert H."/>
            <person name="Braun M."/>
            <person name="Holzer E."/>
            <person name="Brandt A."/>
            <person name="Peters S."/>
            <person name="van Staveren M."/>
            <person name="Dirkse W."/>
            <person name="Mooijman P."/>
            <person name="Klein Lankhorst R."/>
            <person name="Rose M."/>
            <person name="Hauf J."/>
            <person name="Koetter P."/>
            <person name="Berneiser S."/>
            <person name="Hempel S."/>
            <person name="Feldpausch M."/>
            <person name="Lamberth S."/>
            <person name="Van den Daele H."/>
            <person name="De Keyser A."/>
            <person name="Buysshaert C."/>
            <person name="Gielen J."/>
            <person name="Villarroel R."/>
            <person name="De Clercq R."/>
            <person name="van Montagu M."/>
            <person name="Rogers J."/>
            <person name="Cronin A."/>
            <person name="Quail M.A."/>
            <person name="Bray-Allen S."/>
            <person name="Clark L."/>
            <person name="Doggett J."/>
            <person name="Hall S."/>
            <person name="Kay M."/>
            <person name="Lennard N."/>
            <person name="McLay K."/>
            <person name="Mayes R."/>
            <person name="Pettett A."/>
            <person name="Rajandream M.A."/>
            <person name="Lyne M."/>
            <person name="Benes V."/>
            <person name="Rechmann S."/>
            <person name="Borkova D."/>
            <person name="Bloecker H."/>
            <person name="Scharfe M."/>
            <person name="Grimm M."/>
            <person name="Loehnert T.-H."/>
            <person name="Dose S."/>
            <person name="de Haan M."/>
            <person name="Maarse A.C."/>
            <person name="Schaefer M."/>
            <person name="Mueller-Auer S."/>
            <person name="Gabel C."/>
            <person name="Fuchs M."/>
            <person name="Fartmann B."/>
            <person name="Granderath K."/>
            <person name="Dauner D."/>
            <person name="Herzl A."/>
            <person name="Neumann S."/>
            <person name="Argiriou A."/>
            <person name="Vitale D."/>
            <person name="Liguori R."/>
            <person name="Piravandi E."/>
            <person name="Massenet O."/>
            <person name="Quigley F."/>
            <person name="Clabauld G."/>
            <person name="Muendlein A."/>
            <person name="Felber R."/>
            <person name="Schnabl S."/>
            <person name="Hiller R."/>
            <person name="Schmidt W."/>
            <person name="Lecharny A."/>
            <person name="Aubourg S."/>
            <person name="Chefdor F."/>
            <person name="Cooke R."/>
            <person name="Berger C."/>
            <person name="Monfort A."/>
            <person name="Casacuberta E."/>
            <person name="Gibbons T."/>
            <person name="Weber N."/>
            <person name="Vandenbol M."/>
            <person name="Bargues M."/>
            <person name="Terol J."/>
            <person name="Torres A."/>
            <person name="Perez-Perez A."/>
            <person name="Purnelle B."/>
            <person name="Bent E."/>
            <person name="Johnson S."/>
            <person name="Tacon D."/>
            <person name="Jesse T."/>
            <person name="Heijnen L."/>
            <person name="Schwarz S."/>
            <person name="Scholler P."/>
            <person name="Heber S."/>
            <person name="Francs P."/>
            <person name="Bielke C."/>
            <person name="Frishman D."/>
            <person name="Haase D."/>
            <person name="Lemcke K."/>
            <person name="Mewes H.-W."/>
            <person name="Stocker S."/>
            <person name="Zaccaria P."/>
            <person name="Bevan M."/>
            <person name="Wilson R.K."/>
            <person name="de la Bastide M."/>
            <person name="Habermann K."/>
            <person name="Parnell L."/>
            <person name="Dedhia N."/>
            <person name="Gnoj L."/>
            <person name="Schutz K."/>
            <person name="Huang E."/>
            <person name="Spiegel L."/>
            <person name="Sekhon M."/>
            <person name="Murray J."/>
            <person name="Sheet P."/>
            <person name="Cordes M."/>
            <person name="Abu-Threideh J."/>
            <person name="Stoneking T."/>
            <person name="Kalicki J."/>
            <person name="Graves T."/>
            <person name="Harmon G."/>
            <person name="Edwards J."/>
            <person name="Latreille P."/>
            <person name="Courtney L."/>
            <person name="Cloud J."/>
            <person name="Abbott A."/>
            <person name="Scott K."/>
            <person name="Johnson D."/>
            <person name="Minx P."/>
            <person name="Bentley D."/>
            <person name="Fulton B."/>
            <person name="Miller N."/>
            <person name="Greco T."/>
            <person name="Kemp K."/>
            <person name="Kramer J."/>
            <person name="Fulton L."/>
            <person name="Mardis E."/>
            <person name="Dante M."/>
            <person name="Pepin K."/>
            <person name="Hillier L.W."/>
            <person name="Nelson J."/>
            <person name="Spieth J."/>
            <person name="Ryan E."/>
            <person name="Andrews S."/>
            <person name="Geisel C."/>
            <person name="Layman D."/>
            <person name="Du H."/>
            <person name="Ali J."/>
            <person name="Berghoff A."/>
            <person name="Jones K."/>
            <person name="Drone K."/>
            <person name="Cotton M."/>
            <person name="Joshu C."/>
            <person name="Antonoiu B."/>
            <person name="Zidanic M."/>
            <person name="Strong C."/>
            <person name="Sun H."/>
            <person name="Lamar B."/>
            <person name="Yordan C."/>
            <person name="Ma P."/>
            <person name="Zhong J."/>
            <person name="Preston R."/>
            <person name="Vil D."/>
            <person name="Shekher M."/>
            <person name="Matero A."/>
            <person name="Shah R."/>
            <person name="Swaby I.K."/>
            <person name="O'Shaughnessy A."/>
            <person name="Rodriguez M."/>
            <person name="Hoffman J."/>
            <person name="Till S."/>
            <person name="Granat S."/>
            <person name="Shohdy N."/>
            <person name="Hasegawa A."/>
            <person name="Hameed A."/>
            <person name="Lodhi M."/>
            <person name="Johnson A."/>
            <person name="Chen E."/>
            <person name="Marra M.A."/>
            <person name="Martienssen R."/>
            <person name="McCombie W.R."/>
        </authorList>
    </citation>
    <scope>NUCLEOTIDE SEQUENCE [LARGE SCALE GENOMIC DNA]</scope>
    <source>
        <strain>cv. Columbia</strain>
    </source>
</reference>
<reference key="4">
    <citation type="journal article" date="2017" name="Plant J.">
        <title>Araport11: a complete reannotation of the Arabidopsis thaliana reference genome.</title>
        <authorList>
            <person name="Cheng C.Y."/>
            <person name="Krishnakumar V."/>
            <person name="Chan A.P."/>
            <person name="Thibaud-Nissen F."/>
            <person name="Schobel S."/>
            <person name="Town C.D."/>
        </authorList>
    </citation>
    <scope>GENOME REANNOTATION</scope>
    <source>
        <strain>cv. Columbia</strain>
    </source>
</reference>
<reference key="5">
    <citation type="journal article" date="2002" name="Science">
        <title>Functional annotation of a full-length Arabidopsis cDNA collection.</title>
        <authorList>
            <person name="Seki M."/>
            <person name="Narusaka M."/>
            <person name="Kamiya A."/>
            <person name="Ishida J."/>
            <person name="Satou M."/>
            <person name="Sakurai T."/>
            <person name="Nakajima M."/>
            <person name="Enju A."/>
            <person name="Akiyama K."/>
            <person name="Oono Y."/>
            <person name="Muramatsu M."/>
            <person name="Hayashizaki Y."/>
            <person name="Kawai J."/>
            <person name="Carninci P."/>
            <person name="Itoh M."/>
            <person name="Ishii Y."/>
            <person name="Arakawa T."/>
            <person name="Shibata K."/>
            <person name="Shinagawa A."/>
            <person name="Shinozaki K."/>
        </authorList>
    </citation>
    <scope>NUCLEOTIDE SEQUENCE [LARGE SCALE MRNA]</scope>
    <source>
        <strain>cv. Columbia</strain>
    </source>
</reference>
<reference key="6">
    <citation type="journal article" date="2003" name="Science">
        <title>Empirical analysis of transcriptional activity in the Arabidopsis genome.</title>
        <authorList>
            <person name="Yamada K."/>
            <person name="Lim J."/>
            <person name="Dale J.M."/>
            <person name="Chen H."/>
            <person name="Shinn P."/>
            <person name="Palm C.J."/>
            <person name="Southwick A.M."/>
            <person name="Wu H.C."/>
            <person name="Kim C.J."/>
            <person name="Nguyen M."/>
            <person name="Pham P.K."/>
            <person name="Cheuk R.F."/>
            <person name="Karlin-Newmann G."/>
            <person name="Liu S.X."/>
            <person name="Lam B."/>
            <person name="Sakano H."/>
            <person name="Wu T."/>
            <person name="Yu G."/>
            <person name="Miranda M."/>
            <person name="Quach H.L."/>
            <person name="Tripp M."/>
            <person name="Chang C.H."/>
            <person name="Lee J.M."/>
            <person name="Toriumi M.J."/>
            <person name="Chan M.M."/>
            <person name="Tang C.C."/>
            <person name="Onodera C.S."/>
            <person name="Deng J.M."/>
            <person name="Akiyama K."/>
            <person name="Ansari Y."/>
            <person name="Arakawa T."/>
            <person name="Banh J."/>
            <person name="Banno F."/>
            <person name="Bowser L."/>
            <person name="Brooks S.Y."/>
            <person name="Carninci P."/>
            <person name="Chao Q."/>
            <person name="Choy N."/>
            <person name="Enju A."/>
            <person name="Goldsmith A.D."/>
            <person name="Gurjal M."/>
            <person name="Hansen N.F."/>
            <person name="Hayashizaki Y."/>
            <person name="Johnson-Hopson C."/>
            <person name="Hsuan V.W."/>
            <person name="Iida K."/>
            <person name="Karnes M."/>
            <person name="Khan S."/>
            <person name="Koesema E."/>
            <person name="Ishida J."/>
            <person name="Jiang P.X."/>
            <person name="Jones T."/>
            <person name="Kawai J."/>
            <person name="Kamiya A."/>
            <person name="Meyers C."/>
            <person name="Nakajima M."/>
            <person name="Narusaka M."/>
            <person name="Seki M."/>
            <person name="Sakurai T."/>
            <person name="Satou M."/>
            <person name="Tamse R."/>
            <person name="Vaysberg M."/>
            <person name="Wallender E.K."/>
            <person name="Wong C."/>
            <person name="Yamamura Y."/>
            <person name="Yuan S."/>
            <person name="Shinozaki K."/>
            <person name="Davis R.W."/>
            <person name="Theologis A."/>
            <person name="Ecker J.R."/>
        </authorList>
    </citation>
    <scope>NUCLEOTIDE SEQUENCE [LARGE SCALE MRNA]</scope>
    <source>
        <strain>cv. Columbia</strain>
    </source>
</reference>
<reference key="7">
    <citation type="submission" date="2002-03" db="EMBL/GenBank/DDBJ databases">
        <title>Full-length cDNA from Arabidopsis thaliana.</title>
        <authorList>
            <person name="Brover V.V."/>
            <person name="Troukhan M.E."/>
            <person name="Alexandrov N.A."/>
            <person name="Lu Y.-P."/>
            <person name="Flavell R.B."/>
            <person name="Feldmann K.A."/>
        </authorList>
    </citation>
    <scope>NUCLEOTIDE SEQUENCE [LARGE SCALE MRNA]</scope>
</reference>
<reference key="8">
    <citation type="journal article" date="2012" name="Mol. Cell. Proteomics">
        <title>Comparative large-scale characterisation of plant vs. mammal proteins reveals similar and idiosyncratic N-alpha acetylation features.</title>
        <authorList>
            <person name="Bienvenut W.V."/>
            <person name="Sumpton D."/>
            <person name="Martinez A."/>
            <person name="Lilla S."/>
            <person name="Espagne C."/>
            <person name="Meinnel T."/>
            <person name="Giglione C."/>
        </authorList>
    </citation>
    <scope>ACETYLATION [LARGE SCALE ANALYSIS] AT GLY-50</scope>
    <scope>CLEAVAGE OF TRANSIT PEPTIDE [LARGE SCALE ANALYSIS] AFTER SER-49</scope>
    <scope>IDENTIFICATION BY MASS SPECTROMETRY [LARGE SCALE ANALYSIS]</scope>
</reference>
<protein>
    <recommendedName>
        <fullName evidence="1">Methionine aminopeptidase 1D, chloroplastic/mitochondrial</fullName>
        <shortName evidence="1">MAP 1D</shortName>
        <shortName evidence="1">MetAP 1D</shortName>
        <ecNumber evidence="1">3.4.11.18</ecNumber>
    </recommendedName>
    <alternativeName>
        <fullName evidence="1">Peptidase M 1D</fullName>
    </alternativeName>
</protein>
<proteinExistence type="evidence at protein level"/>
<evidence type="ECO:0000255" key="1">
    <source>
        <dbReference type="HAMAP-Rule" id="MF_03174"/>
    </source>
</evidence>
<evidence type="ECO:0000256" key="2">
    <source>
        <dbReference type="SAM" id="MobiDB-lite"/>
    </source>
</evidence>
<evidence type="ECO:0000269" key="3">
    <source>
    </source>
</evidence>
<evidence type="ECO:0000305" key="4"/>
<evidence type="ECO:0007744" key="5">
    <source>
    </source>
</evidence>
<keyword id="KW-0007">Acetylation</keyword>
<keyword id="KW-0031">Aminopeptidase</keyword>
<keyword id="KW-0150">Chloroplast</keyword>
<keyword id="KW-0378">Hydrolase</keyword>
<keyword id="KW-0479">Metal-binding</keyword>
<keyword id="KW-0496">Mitochondrion</keyword>
<keyword id="KW-0934">Plastid</keyword>
<keyword id="KW-0645">Protease</keyword>
<keyword id="KW-1185">Reference proteome</keyword>
<keyword id="KW-0809">Transit peptide</keyword>
<organism>
    <name type="scientific">Arabidopsis thaliana</name>
    <name type="common">Mouse-ear cress</name>
    <dbReference type="NCBI Taxonomy" id="3702"/>
    <lineage>
        <taxon>Eukaryota</taxon>
        <taxon>Viridiplantae</taxon>
        <taxon>Streptophyta</taxon>
        <taxon>Embryophyta</taxon>
        <taxon>Tracheophyta</taxon>
        <taxon>Spermatophyta</taxon>
        <taxon>Magnoliopsida</taxon>
        <taxon>eudicotyledons</taxon>
        <taxon>Gunneridae</taxon>
        <taxon>Pentapetalae</taxon>
        <taxon>rosids</taxon>
        <taxon>malvids</taxon>
        <taxon>Brassicales</taxon>
        <taxon>Brassicaceae</taxon>
        <taxon>Camelineae</taxon>
        <taxon>Arabidopsis</taxon>
    </lineage>
</organism>